<name>RLUB_SHIFL</name>
<sequence>MSEKLQKVLARAGHGSRREIESIIEAGRVSVDGKIAKLGDRVEVTPGLKIRIDGHLISVRESAEQICRVLAYYKPEGELCTRNDPEGRPTVFDRLPKLRGARWIAVGRLDVNTCGLLLFTTDGELANRLMHPSREVEREYAVRVFGQVDDAKLRDLSRGVQLEDGPAAFKTIKFSGGEGINQWYNVTLTEGRNREVRRLWEAVGVQVSRLIRVRYGDIPLPKGLPRGGWTELDLAQTNYLRELVELPPETSSKVAVEKDRRRMKANQIRRAVKRHSQVSGSRRSGGRNNG</sequence>
<keyword id="KW-0413">Isomerase</keyword>
<keyword id="KW-1185">Reference proteome</keyword>
<keyword id="KW-0694">RNA-binding</keyword>
<keyword id="KW-0698">rRNA processing</keyword>
<protein>
    <recommendedName>
        <fullName>Ribosomal large subunit pseudouridine synthase B</fullName>
        <ecNumber>5.4.99.22</ecNumber>
    </recommendedName>
    <alternativeName>
        <fullName>23S rRNA pseudouridine(2605) synthase</fullName>
    </alternativeName>
    <alternativeName>
        <fullName>rRNA pseudouridylate synthase B</fullName>
    </alternativeName>
    <alternativeName>
        <fullName>rRNA-uridine isomerase B</fullName>
    </alternativeName>
</protein>
<evidence type="ECO:0000250" key="1"/>
<evidence type="ECO:0000255" key="2">
    <source>
        <dbReference type="PROSITE-ProRule" id="PRU00182"/>
    </source>
</evidence>
<evidence type="ECO:0000256" key="3">
    <source>
        <dbReference type="SAM" id="MobiDB-lite"/>
    </source>
</evidence>
<evidence type="ECO:0000305" key="4"/>
<dbReference type="EC" id="5.4.99.22"/>
<dbReference type="EMBL" id="AE005674">
    <property type="status" value="NOT_ANNOTATED_CDS"/>
    <property type="molecule type" value="Genomic_DNA"/>
</dbReference>
<dbReference type="EMBL" id="AE014073">
    <property type="protein sequence ID" value="AAP16769.1"/>
    <property type="molecule type" value="Genomic_DNA"/>
</dbReference>
<dbReference type="RefSeq" id="WP_001291219.1">
    <property type="nucleotide sequence ID" value="NZ_WPGW01000009.1"/>
</dbReference>
<dbReference type="SMR" id="P59815"/>
<dbReference type="KEGG" id="sfx:S1356"/>
<dbReference type="PATRIC" id="fig|623.156.peg.682"/>
<dbReference type="HOGENOM" id="CLU_024979_1_1_6"/>
<dbReference type="Proteomes" id="UP000001006">
    <property type="component" value="Chromosome"/>
</dbReference>
<dbReference type="Proteomes" id="UP000002673">
    <property type="component" value="Chromosome"/>
</dbReference>
<dbReference type="GO" id="GO:0160139">
    <property type="term" value="F:23S rRNA pseudouridine(2605) synthase activity"/>
    <property type="evidence" value="ECO:0007669"/>
    <property type="project" value="UniProtKB-EC"/>
</dbReference>
<dbReference type="GO" id="GO:0003723">
    <property type="term" value="F:RNA binding"/>
    <property type="evidence" value="ECO:0007669"/>
    <property type="project" value="UniProtKB-KW"/>
</dbReference>
<dbReference type="GO" id="GO:0000455">
    <property type="term" value="P:enzyme-directed rRNA pseudouridine synthesis"/>
    <property type="evidence" value="ECO:0007669"/>
    <property type="project" value="UniProtKB-ARBA"/>
</dbReference>
<dbReference type="CDD" id="cd02556">
    <property type="entry name" value="PseudoU_synth_RluB"/>
    <property type="match status" value="1"/>
</dbReference>
<dbReference type="CDD" id="cd00165">
    <property type="entry name" value="S4"/>
    <property type="match status" value="1"/>
</dbReference>
<dbReference type="FunFam" id="3.10.290.10:FF:000003">
    <property type="entry name" value="Pseudouridine synthase"/>
    <property type="match status" value="1"/>
</dbReference>
<dbReference type="FunFam" id="3.30.2350.10:FF:000002">
    <property type="entry name" value="Pseudouridine synthase"/>
    <property type="match status" value="1"/>
</dbReference>
<dbReference type="Gene3D" id="3.30.2350.10">
    <property type="entry name" value="Pseudouridine synthase"/>
    <property type="match status" value="1"/>
</dbReference>
<dbReference type="Gene3D" id="3.10.290.10">
    <property type="entry name" value="RNA-binding S4 domain"/>
    <property type="match status" value="1"/>
</dbReference>
<dbReference type="InterPro" id="IPR020103">
    <property type="entry name" value="PsdUridine_synth_cat_dom_sf"/>
</dbReference>
<dbReference type="InterPro" id="IPR006145">
    <property type="entry name" value="PsdUridine_synth_RsuA/RluA"/>
</dbReference>
<dbReference type="InterPro" id="IPR000748">
    <property type="entry name" value="PsdUridine_synth_RsuA/RluB/E/F"/>
</dbReference>
<dbReference type="InterPro" id="IPR018496">
    <property type="entry name" value="PsdUridine_synth_RsuA/RluB_CS"/>
</dbReference>
<dbReference type="InterPro" id="IPR050343">
    <property type="entry name" value="RsuA_PseudoU_synthase"/>
</dbReference>
<dbReference type="InterPro" id="IPR002942">
    <property type="entry name" value="S4_RNA-bd"/>
</dbReference>
<dbReference type="InterPro" id="IPR036986">
    <property type="entry name" value="S4_RNA-bd_sf"/>
</dbReference>
<dbReference type="NCBIfam" id="NF007976">
    <property type="entry name" value="PRK10700.1"/>
    <property type="match status" value="1"/>
</dbReference>
<dbReference type="NCBIfam" id="TIGR00093">
    <property type="entry name" value="pseudouridine synthase"/>
    <property type="match status" value="1"/>
</dbReference>
<dbReference type="PANTHER" id="PTHR47683">
    <property type="entry name" value="PSEUDOURIDINE SYNTHASE FAMILY PROTEIN-RELATED"/>
    <property type="match status" value="1"/>
</dbReference>
<dbReference type="PANTHER" id="PTHR47683:SF3">
    <property type="entry name" value="RIBOSOMAL LARGE SUBUNIT PSEUDOURIDINE SYNTHASE B"/>
    <property type="match status" value="1"/>
</dbReference>
<dbReference type="Pfam" id="PF00849">
    <property type="entry name" value="PseudoU_synth_2"/>
    <property type="match status" value="1"/>
</dbReference>
<dbReference type="Pfam" id="PF01479">
    <property type="entry name" value="S4"/>
    <property type="match status" value="1"/>
</dbReference>
<dbReference type="SMART" id="SM00363">
    <property type="entry name" value="S4"/>
    <property type="match status" value="1"/>
</dbReference>
<dbReference type="SUPFAM" id="SSF55174">
    <property type="entry name" value="Alpha-L RNA-binding motif"/>
    <property type="match status" value="1"/>
</dbReference>
<dbReference type="SUPFAM" id="SSF55120">
    <property type="entry name" value="Pseudouridine synthase"/>
    <property type="match status" value="1"/>
</dbReference>
<dbReference type="PROSITE" id="PS01149">
    <property type="entry name" value="PSI_RSU"/>
    <property type="match status" value="1"/>
</dbReference>
<dbReference type="PROSITE" id="PS50889">
    <property type="entry name" value="S4"/>
    <property type="match status" value="1"/>
</dbReference>
<gene>
    <name type="primary">rluB</name>
    <name type="ordered locus">SF1271</name>
    <name type="ordered locus">S1356</name>
</gene>
<proteinExistence type="inferred from homology"/>
<organism>
    <name type="scientific">Shigella flexneri</name>
    <dbReference type="NCBI Taxonomy" id="623"/>
    <lineage>
        <taxon>Bacteria</taxon>
        <taxon>Pseudomonadati</taxon>
        <taxon>Pseudomonadota</taxon>
        <taxon>Gammaproteobacteria</taxon>
        <taxon>Enterobacterales</taxon>
        <taxon>Enterobacteriaceae</taxon>
        <taxon>Shigella</taxon>
    </lineage>
</organism>
<accession>P59815</accession>
<reference key="1">
    <citation type="journal article" date="2002" name="Nucleic Acids Res.">
        <title>Genome sequence of Shigella flexneri 2a: insights into pathogenicity through comparison with genomes of Escherichia coli K12 and O157.</title>
        <authorList>
            <person name="Jin Q."/>
            <person name="Yuan Z."/>
            <person name="Xu J."/>
            <person name="Wang Y."/>
            <person name="Shen Y."/>
            <person name="Lu W."/>
            <person name="Wang J."/>
            <person name="Liu H."/>
            <person name="Yang J."/>
            <person name="Yang F."/>
            <person name="Zhang X."/>
            <person name="Zhang J."/>
            <person name="Yang G."/>
            <person name="Wu H."/>
            <person name="Qu D."/>
            <person name="Dong J."/>
            <person name="Sun L."/>
            <person name="Xue Y."/>
            <person name="Zhao A."/>
            <person name="Gao Y."/>
            <person name="Zhu J."/>
            <person name="Kan B."/>
            <person name="Ding K."/>
            <person name="Chen S."/>
            <person name="Cheng H."/>
            <person name="Yao Z."/>
            <person name="He B."/>
            <person name="Chen R."/>
            <person name="Ma D."/>
            <person name="Qiang B."/>
            <person name="Wen Y."/>
            <person name="Hou Y."/>
            <person name="Yu J."/>
        </authorList>
    </citation>
    <scope>NUCLEOTIDE SEQUENCE [LARGE SCALE GENOMIC DNA]</scope>
    <source>
        <strain>301 / Serotype 2a</strain>
    </source>
</reference>
<reference key="2">
    <citation type="journal article" date="2003" name="Infect. Immun.">
        <title>Complete genome sequence and comparative genomics of Shigella flexneri serotype 2a strain 2457T.</title>
        <authorList>
            <person name="Wei J."/>
            <person name="Goldberg M.B."/>
            <person name="Burland V."/>
            <person name="Venkatesan M.M."/>
            <person name="Deng W."/>
            <person name="Fournier G."/>
            <person name="Mayhew G.F."/>
            <person name="Plunkett G. III"/>
            <person name="Rose D.J."/>
            <person name="Darling A."/>
            <person name="Mau B."/>
            <person name="Perna N.T."/>
            <person name="Payne S.M."/>
            <person name="Runyen-Janecky L.J."/>
            <person name="Zhou S."/>
            <person name="Schwartz D.C."/>
            <person name="Blattner F.R."/>
        </authorList>
    </citation>
    <scope>NUCLEOTIDE SEQUENCE [LARGE SCALE GENOMIC DNA]</scope>
    <source>
        <strain>ATCC 700930 / 2457T / Serotype 2a</strain>
    </source>
</reference>
<comment type="function">
    <text evidence="1">Responsible for synthesis of pseudouridine from uracil-2605 in 23S ribosomal RNA.</text>
</comment>
<comment type="catalytic activity">
    <reaction>
        <text>uridine(2605) in 23S rRNA = pseudouridine(2605) in 23S rRNA</text>
        <dbReference type="Rhea" id="RHEA:42520"/>
        <dbReference type="Rhea" id="RHEA-COMP:10095"/>
        <dbReference type="Rhea" id="RHEA-COMP:10096"/>
        <dbReference type="ChEBI" id="CHEBI:65314"/>
        <dbReference type="ChEBI" id="CHEBI:65315"/>
        <dbReference type="EC" id="5.4.99.22"/>
    </reaction>
</comment>
<comment type="similarity">
    <text evidence="4">Belongs to the pseudouridine synthase RsuA family.</text>
</comment>
<comment type="caution">
    <text evidence="4">In strain 301 it seems to be a pseudogene. It is interrupted by a frameshift in position 119. The sequence has been verified by the authors and is believed to be correct.</text>
</comment>
<feature type="chain" id="PRO_0000099991" description="Ribosomal large subunit pseudouridine synthase B">
    <location>
        <begin position="1"/>
        <end position="290"/>
    </location>
</feature>
<feature type="domain" description="S4 RNA-binding" evidence="2">
    <location>
        <begin position="3"/>
        <end position="75"/>
    </location>
</feature>
<feature type="region of interest" description="Disordered" evidence="3">
    <location>
        <begin position="251"/>
        <end position="290"/>
    </location>
</feature>
<feature type="active site" description="Nucleophile" evidence="1">
    <location>
        <position position="110"/>
    </location>
</feature>
<feature type="sequence conflict" description="In Ref. 1." evidence="4" ref="1">
    <original>AVGRLDVNTCGLLL</original>
    <variation>TVVV</variation>
    <location>
        <begin position="105"/>
        <end position="118"/>
    </location>
</feature>